<organism>
    <name type="scientific">Pasteurella multocida (strain Pm70)</name>
    <dbReference type="NCBI Taxonomy" id="272843"/>
    <lineage>
        <taxon>Bacteria</taxon>
        <taxon>Pseudomonadati</taxon>
        <taxon>Pseudomonadota</taxon>
        <taxon>Gammaproteobacteria</taxon>
        <taxon>Pasteurellales</taxon>
        <taxon>Pasteurellaceae</taxon>
        <taxon>Pasteurella</taxon>
    </lineage>
</organism>
<name>SECB_PASMU</name>
<protein>
    <recommendedName>
        <fullName evidence="1">Protein-export protein SecB</fullName>
    </recommendedName>
</protein>
<feature type="chain" id="PRO_0000055390" description="Protein-export protein SecB">
    <location>
        <begin position="1"/>
        <end position="170"/>
    </location>
</feature>
<reference key="1">
    <citation type="journal article" date="2001" name="Proc. Natl. Acad. Sci. U.S.A.">
        <title>Complete genomic sequence of Pasteurella multocida Pm70.</title>
        <authorList>
            <person name="May B.J."/>
            <person name="Zhang Q."/>
            <person name="Li L.L."/>
            <person name="Paustian M.L."/>
            <person name="Whittam T.S."/>
            <person name="Kapur V."/>
        </authorList>
    </citation>
    <scope>NUCLEOTIDE SEQUENCE [LARGE SCALE GENOMIC DNA]</scope>
    <source>
        <strain>Pm70</strain>
    </source>
</reference>
<dbReference type="EMBL" id="AE004439">
    <property type="protein sequence ID" value="AAK03516.1"/>
    <property type="molecule type" value="Genomic_DNA"/>
</dbReference>
<dbReference type="RefSeq" id="WP_005724094.1">
    <property type="nucleotide sequence ID" value="NC_002663.1"/>
</dbReference>
<dbReference type="SMR" id="Q9CL16"/>
<dbReference type="STRING" id="272843.PM1432"/>
<dbReference type="EnsemblBacteria" id="AAK03516">
    <property type="protein sequence ID" value="AAK03516"/>
    <property type="gene ID" value="PM1432"/>
</dbReference>
<dbReference type="GeneID" id="77207009"/>
<dbReference type="KEGG" id="pmu:PM1432"/>
<dbReference type="HOGENOM" id="CLU_111574_1_0_6"/>
<dbReference type="OrthoDB" id="9795145at2"/>
<dbReference type="Proteomes" id="UP000000809">
    <property type="component" value="Chromosome"/>
</dbReference>
<dbReference type="GO" id="GO:0005737">
    <property type="term" value="C:cytoplasm"/>
    <property type="evidence" value="ECO:0007669"/>
    <property type="project" value="UniProtKB-SubCell"/>
</dbReference>
<dbReference type="GO" id="GO:0051082">
    <property type="term" value="F:unfolded protein binding"/>
    <property type="evidence" value="ECO:0007669"/>
    <property type="project" value="InterPro"/>
</dbReference>
<dbReference type="GO" id="GO:0006457">
    <property type="term" value="P:protein folding"/>
    <property type="evidence" value="ECO:0007669"/>
    <property type="project" value="UniProtKB-UniRule"/>
</dbReference>
<dbReference type="GO" id="GO:0051262">
    <property type="term" value="P:protein tetramerization"/>
    <property type="evidence" value="ECO:0007669"/>
    <property type="project" value="InterPro"/>
</dbReference>
<dbReference type="GO" id="GO:0015031">
    <property type="term" value="P:protein transport"/>
    <property type="evidence" value="ECO:0007669"/>
    <property type="project" value="UniProtKB-UniRule"/>
</dbReference>
<dbReference type="CDD" id="cd00557">
    <property type="entry name" value="Translocase_SecB"/>
    <property type="match status" value="1"/>
</dbReference>
<dbReference type="Gene3D" id="3.10.420.10">
    <property type="entry name" value="SecB-like"/>
    <property type="match status" value="1"/>
</dbReference>
<dbReference type="HAMAP" id="MF_00821">
    <property type="entry name" value="SecB"/>
    <property type="match status" value="1"/>
</dbReference>
<dbReference type="InterPro" id="IPR003708">
    <property type="entry name" value="SecB"/>
</dbReference>
<dbReference type="InterPro" id="IPR035958">
    <property type="entry name" value="SecB-like_sf"/>
</dbReference>
<dbReference type="NCBIfam" id="NF004393">
    <property type="entry name" value="PRK05751.1-4"/>
    <property type="match status" value="1"/>
</dbReference>
<dbReference type="NCBIfam" id="TIGR00809">
    <property type="entry name" value="secB"/>
    <property type="match status" value="1"/>
</dbReference>
<dbReference type="PANTHER" id="PTHR36918">
    <property type="match status" value="1"/>
</dbReference>
<dbReference type="PANTHER" id="PTHR36918:SF1">
    <property type="entry name" value="PROTEIN-EXPORT PROTEIN SECB"/>
    <property type="match status" value="1"/>
</dbReference>
<dbReference type="Pfam" id="PF02556">
    <property type="entry name" value="SecB"/>
    <property type="match status" value="1"/>
</dbReference>
<dbReference type="PRINTS" id="PR01594">
    <property type="entry name" value="SECBCHAPRONE"/>
</dbReference>
<dbReference type="SUPFAM" id="SSF54611">
    <property type="entry name" value="SecB-like"/>
    <property type="match status" value="1"/>
</dbReference>
<proteinExistence type="inferred from homology"/>
<gene>
    <name evidence="1" type="primary">secB</name>
    <name type="ordered locus">PM1432</name>
</gene>
<evidence type="ECO:0000255" key="1">
    <source>
        <dbReference type="HAMAP-Rule" id="MF_00821"/>
    </source>
</evidence>
<accession>Q9CL16</accession>
<sequence>MSEENQVNAADTQATQQPVLQIQRIYVKDVSFEAPNLPHIFQQDWEPKLSFDLSTEAKQVGDDLYEVCLNISVETTMESSGDVAFICEVKQAGVFTISGLEEMQMAHCLTSQCPNMLFPYARELVSSLVNRGTFPALNLSPVNFDALFMDYLQRQEQAEQTTEEENKDVH</sequence>
<comment type="function">
    <text evidence="1">One of the proteins required for the normal export of preproteins out of the cell cytoplasm. It is a molecular chaperone that binds to a subset of precursor proteins, maintaining them in a translocation-competent state. It also specifically binds to its receptor SecA.</text>
</comment>
<comment type="subunit">
    <text evidence="1">Homotetramer, a dimer of dimers. One homotetramer interacts with 1 SecA dimer.</text>
</comment>
<comment type="subcellular location">
    <subcellularLocation>
        <location evidence="1">Cytoplasm</location>
    </subcellularLocation>
</comment>
<comment type="similarity">
    <text evidence="1">Belongs to the SecB family.</text>
</comment>
<keyword id="KW-0143">Chaperone</keyword>
<keyword id="KW-0963">Cytoplasm</keyword>
<keyword id="KW-0653">Protein transport</keyword>
<keyword id="KW-1185">Reference proteome</keyword>
<keyword id="KW-0811">Translocation</keyword>
<keyword id="KW-0813">Transport</keyword>